<organism>
    <name type="scientific">Borrelia recurrentis (strain A1)</name>
    <dbReference type="NCBI Taxonomy" id="412418"/>
    <lineage>
        <taxon>Bacteria</taxon>
        <taxon>Pseudomonadati</taxon>
        <taxon>Spirochaetota</taxon>
        <taxon>Spirochaetia</taxon>
        <taxon>Spirochaetales</taxon>
        <taxon>Borreliaceae</taxon>
        <taxon>Borrelia</taxon>
    </lineage>
</organism>
<protein>
    <recommendedName>
        <fullName evidence="1">Triosephosphate isomerase</fullName>
        <shortName evidence="1">TIM</shortName>
        <shortName evidence="1">TPI</shortName>
        <ecNumber evidence="1">5.3.1.1</ecNumber>
    </recommendedName>
    <alternativeName>
        <fullName evidence="1">Triose-phosphate isomerase</fullName>
    </alternativeName>
</protein>
<evidence type="ECO:0000255" key="1">
    <source>
        <dbReference type="HAMAP-Rule" id="MF_00147"/>
    </source>
</evidence>
<keyword id="KW-0963">Cytoplasm</keyword>
<keyword id="KW-0312">Gluconeogenesis</keyword>
<keyword id="KW-0324">Glycolysis</keyword>
<keyword id="KW-0413">Isomerase</keyword>
<reference key="1">
    <citation type="journal article" date="2008" name="PLoS Genet.">
        <title>The genome of Borrelia recurrentis, the agent of deadly louse-borne relapsing fever, is a degraded subset of tick-borne Borrelia duttonii.</title>
        <authorList>
            <person name="Lescot M."/>
            <person name="Audic S."/>
            <person name="Robert C."/>
            <person name="Nguyen T.T."/>
            <person name="Blanc G."/>
            <person name="Cutler S.J."/>
            <person name="Wincker P."/>
            <person name="Couloux A."/>
            <person name="Claverie J.-M."/>
            <person name="Raoult D."/>
            <person name="Drancourt M."/>
        </authorList>
    </citation>
    <scope>NUCLEOTIDE SEQUENCE [LARGE SCALE GENOMIC DNA]</scope>
    <source>
        <strain>A1</strain>
    </source>
</reference>
<name>TPIS_BORRA</name>
<sequence length="254" mass="27895">MRKVFLAGNWKMHYTSVEAADVAKQIVDGVYNINNNVVVMVTPTFTSLCKVCRVTKGTNVLLGAQNMSYENSGARTSEIAPSMLLEFGVDYVILGHSECRTYLGENDEIINKKVLTGLKHPFKYLILCVGETLEEREKGKTLDVVLNQVRNGLASVYESDLQRIILAYEPVWAIGTGKTATKEEAQEVHKAIRLEIQSLYSKSAADNIIIQYGGSVNVDNVEGLMGENDIDGALIGGSSLKADSFLKIINKISK</sequence>
<comment type="function">
    <text evidence="1">Involved in the gluconeogenesis. Catalyzes stereospecifically the conversion of dihydroxyacetone phosphate (DHAP) to D-glyceraldehyde-3-phosphate (G3P).</text>
</comment>
<comment type="catalytic activity">
    <reaction evidence="1">
        <text>D-glyceraldehyde 3-phosphate = dihydroxyacetone phosphate</text>
        <dbReference type="Rhea" id="RHEA:18585"/>
        <dbReference type="ChEBI" id="CHEBI:57642"/>
        <dbReference type="ChEBI" id="CHEBI:59776"/>
        <dbReference type="EC" id="5.3.1.1"/>
    </reaction>
</comment>
<comment type="pathway">
    <text evidence="1">Carbohydrate biosynthesis; gluconeogenesis.</text>
</comment>
<comment type="pathway">
    <text evidence="1">Carbohydrate degradation; glycolysis; D-glyceraldehyde 3-phosphate from glycerone phosphate: step 1/1.</text>
</comment>
<comment type="subunit">
    <text evidence="1">Homodimer.</text>
</comment>
<comment type="subcellular location">
    <subcellularLocation>
        <location evidence="1">Cytoplasm</location>
    </subcellularLocation>
</comment>
<comment type="similarity">
    <text evidence="1">Belongs to the triosephosphate isomerase family.</text>
</comment>
<proteinExistence type="inferred from homology"/>
<gene>
    <name evidence="1" type="primary">tpiA</name>
    <name type="ordered locus">BRE_58</name>
</gene>
<feature type="chain" id="PRO_1000096480" description="Triosephosphate isomerase">
    <location>
        <begin position="1"/>
        <end position="254"/>
    </location>
</feature>
<feature type="active site" description="Electrophile" evidence="1">
    <location>
        <position position="96"/>
    </location>
</feature>
<feature type="active site" description="Proton acceptor" evidence="1">
    <location>
        <position position="169"/>
    </location>
</feature>
<feature type="binding site" evidence="1">
    <location>
        <begin position="9"/>
        <end position="11"/>
    </location>
    <ligand>
        <name>substrate</name>
    </ligand>
</feature>
<feature type="binding site" evidence="1">
    <location>
        <position position="175"/>
    </location>
    <ligand>
        <name>substrate</name>
    </ligand>
</feature>
<feature type="binding site" evidence="1">
    <location>
        <position position="215"/>
    </location>
    <ligand>
        <name>substrate</name>
    </ligand>
</feature>
<feature type="binding site" evidence="1">
    <location>
        <begin position="236"/>
        <end position="237"/>
    </location>
    <ligand>
        <name>substrate</name>
    </ligand>
</feature>
<accession>B5RQN4</accession>
<dbReference type="EC" id="5.3.1.1" evidence="1"/>
<dbReference type="EMBL" id="CP000993">
    <property type="protein sequence ID" value="ACH94318.1"/>
    <property type="molecule type" value="Genomic_DNA"/>
</dbReference>
<dbReference type="RefSeq" id="WP_012538625.1">
    <property type="nucleotide sequence ID" value="NC_011244.1"/>
</dbReference>
<dbReference type="SMR" id="B5RQN4"/>
<dbReference type="KEGG" id="bre:BRE_58"/>
<dbReference type="HOGENOM" id="CLU_024251_2_3_12"/>
<dbReference type="UniPathway" id="UPA00109">
    <property type="reaction ID" value="UER00189"/>
</dbReference>
<dbReference type="UniPathway" id="UPA00138"/>
<dbReference type="Proteomes" id="UP000000612">
    <property type="component" value="Chromosome"/>
</dbReference>
<dbReference type="GO" id="GO:0005829">
    <property type="term" value="C:cytosol"/>
    <property type="evidence" value="ECO:0007669"/>
    <property type="project" value="TreeGrafter"/>
</dbReference>
<dbReference type="GO" id="GO:0004807">
    <property type="term" value="F:triose-phosphate isomerase activity"/>
    <property type="evidence" value="ECO:0007669"/>
    <property type="project" value="UniProtKB-UniRule"/>
</dbReference>
<dbReference type="GO" id="GO:0006094">
    <property type="term" value="P:gluconeogenesis"/>
    <property type="evidence" value="ECO:0007669"/>
    <property type="project" value="UniProtKB-UniRule"/>
</dbReference>
<dbReference type="GO" id="GO:0046166">
    <property type="term" value="P:glyceraldehyde-3-phosphate biosynthetic process"/>
    <property type="evidence" value="ECO:0007669"/>
    <property type="project" value="TreeGrafter"/>
</dbReference>
<dbReference type="GO" id="GO:0019563">
    <property type="term" value="P:glycerol catabolic process"/>
    <property type="evidence" value="ECO:0007669"/>
    <property type="project" value="TreeGrafter"/>
</dbReference>
<dbReference type="GO" id="GO:0006096">
    <property type="term" value="P:glycolytic process"/>
    <property type="evidence" value="ECO:0007669"/>
    <property type="project" value="UniProtKB-UniRule"/>
</dbReference>
<dbReference type="CDD" id="cd00311">
    <property type="entry name" value="TIM"/>
    <property type="match status" value="1"/>
</dbReference>
<dbReference type="FunFam" id="3.20.20.70:FF:000016">
    <property type="entry name" value="Triosephosphate isomerase"/>
    <property type="match status" value="1"/>
</dbReference>
<dbReference type="Gene3D" id="3.20.20.70">
    <property type="entry name" value="Aldolase class I"/>
    <property type="match status" value="1"/>
</dbReference>
<dbReference type="HAMAP" id="MF_00147_B">
    <property type="entry name" value="TIM_B"/>
    <property type="match status" value="1"/>
</dbReference>
<dbReference type="InterPro" id="IPR013785">
    <property type="entry name" value="Aldolase_TIM"/>
</dbReference>
<dbReference type="InterPro" id="IPR035990">
    <property type="entry name" value="TIM_sf"/>
</dbReference>
<dbReference type="InterPro" id="IPR022896">
    <property type="entry name" value="TrioseP_Isoase_bac/euk"/>
</dbReference>
<dbReference type="InterPro" id="IPR000652">
    <property type="entry name" value="Triosephosphate_isomerase"/>
</dbReference>
<dbReference type="InterPro" id="IPR020861">
    <property type="entry name" value="Triosephosphate_isomerase_AS"/>
</dbReference>
<dbReference type="NCBIfam" id="TIGR00419">
    <property type="entry name" value="tim"/>
    <property type="match status" value="1"/>
</dbReference>
<dbReference type="PANTHER" id="PTHR21139">
    <property type="entry name" value="TRIOSEPHOSPHATE ISOMERASE"/>
    <property type="match status" value="1"/>
</dbReference>
<dbReference type="PANTHER" id="PTHR21139:SF42">
    <property type="entry name" value="TRIOSEPHOSPHATE ISOMERASE"/>
    <property type="match status" value="1"/>
</dbReference>
<dbReference type="Pfam" id="PF00121">
    <property type="entry name" value="TIM"/>
    <property type="match status" value="1"/>
</dbReference>
<dbReference type="SUPFAM" id="SSF51351">
    <property type="entry name" value="Triosephosphate isomerase (TIM)"/>
    <property type="match status" value="1"/>
</dbReference>
<dbReference type="PROSITE" id="PS00171">
    <property type="entry name" value="TIM_1"/>
    <property type="match status" value="1"/>
</dbReference>
<dbReference type="PROSITE" id="PS51440">
    <property type="entry name" value="TIM_2"/>
    <property type="match status" value="1"/>
</dbReference>